<evidence type="ECO:0000255" key="1">
    <source>
        <dbReference type="HAMAP-Rule" id="MF_01356"/>
    </source>
</evidence>
<gene>
    <name evidence="1" type="primary">ndhK</name>
</gene>
<proteinExistence type="inferred from homology"/>
<sequence length="225" mass="25303">MNSIKFPVLDRTTKNSVISTTLNDLSNWSRLSSLWPLLYGTSCCFIEFASLIGSRFDFDRYGLVPRSSPRQADLILTAGTVTMKMAPSLVRLYEQMPEPKYVIAMGACTITGGMFSTDSYSTVRGVDKLIPVDVYLPGCPPKPEAVIDAITKLRKKIAREIYKDQIRPQQGNRCFTTTHKFFVVRSTHTGNYDQELLYPPSSTSEISTETFFKYKSPVSSHELVN</sequence>
<organism>
    <name type="scientific">Arabis hirsuta</name>
    <name type="common">Hairy rock-cress</name>
    <name type="synonym">Turritis hirsuta</name>
    <dbReference type="NCBI Taxonomy" id="78191"/>
    <lineage>
        <taxon>Eukaryota</taxon>
        <taxon>Viridiplantae</taxon>
        <taxon>Streptophyta</taxon>
        <taxon>Embryophyta</taxon>
        <taxon>Tracheophyta</taxon>
        <taxon>Spermatophyta</taxon>
        <taxon>Magnoliopsida</taxon>
        <taxon>eudicotyledons</taxon>
        <taxon>Gunneridae</taxon>
        <taxon>Pentapetalae</taxon>
        <taxon>rosids</taxon>
        <taxon>malvids</taxon>
        <taxon>Brassicales</taxon>
        <taxon>Brassicaceae</taxon>
        <taxon>Arabideae</taxon>
        <taxon>Arabis</taxon>
    </lineage>
</organism>
<name>NDHK_ARAHI</name>
<dbReference type="EC" id="7.1.1.-" evidence="1"/>
<dbReference type="EMBL" id="AP009369">
    <property type="protein sequence ID" value="BAF50027.1"/>
    <property type="molecule type" value="Genomic_DNA"/>
</dbReference>
<dbReference type="RefSeq" id="YP_001123203.1">
    <property type="nucleotide sequence ID" value="NC_009268.1"/>
</dbReference>
<dbReference type="SMR" id="A4QK22"/>
<dbReference type="GeneID" id="4962551"/>
<dbReference type="GO" id="GO:0009535">
    <property type="term" value="C:chloroplast thylakoid membrane"/>
    <property type="evidence" value="ECO:0007669"/>
    <property type="project" value="UniProtKB-SubCell"/>
</dbReference>
<dbReference type="GO" id="GO:0045271">
    <property type="term" value="C:respiratory chain complex I"/>
    <property type="evidence" value="ECO:0007669"/>
    <property type="project" value="TreeGrafter"/>
</dbReference>
<dbReference type="GO" id="GO:0051539">
    <property type="term" value="F:4 iron, 4 sulfur cluster binding"/>
    <property type="evidence" value="ECO:0007669"/>
    <property type="project" value="UniProtKB-KW"/>
</dbReference>
<dbReference type="GO" id="GO:0005506">
    <property type="term" value="F:iron ion binding"/>
    <property type="evidence" value="ECO:0007669"/>
    <property type="project" value="UniProtKB-UniRule"/>
</dbReference>
<dbReference type="GO" id="GO:0008137">
    <property type="term" value="F:NADH dehydrogenase (ubiquinone) activity"/>
    <property type="evidence" value="ECO:0007669"/>
    <property type="project" value="InterPro"/>
</dbReference>
<dbReference type="GO" id="GO:0048038">
    <property type="term" value="F:quinone binding"/>
    <property type="evidence" value="ECO:0007669"/>
    <property type="project" value="UniProtKB-KW"/>
</dbReference>
<dbReference type="GO" id="GO:0009060">
    <property type="term" value="P:aerobic respiration"/>
    <property type="evidence" value="ECO:0007669"/>
    <property type="project" value="TreeGrafter"/>
</dbReference>
<dbReference type="GO" id="GO:0015990">
    <property type="term" value="P:electron transport coupled proton transport"/>
    <property type="evidence" value="ECO:0007669"/>
    <property type="project" value="TreeGrafter"/>
</dbReference>
<dbReference type="GO" id="GO:0019684">
    <property type="term" value="P:photosynthesis, light reaction"/>
    <property type="evidence" value="ECO:0007669"/>
    <property type="project" value="UniProtKB-UniRule"/>
</dbReference>
<dbReference type="FunFam" id="3.40.50.12280:FF:000003">
    <property type="entry name" value="NAD(P)H-quinone oxidoreductase subunit K, chloroplastic"/>
    <property type="match status" value="1"/>
</dbReference>
<dbReference type="Gene3D" id="3.40.50.12280">
    <property type="match status" value="1"/>
</dbReference>
<dbReference type="HAMAP" id="MF_01356">
    <property type="entry name" value="NDH1_NuoB"/>
    <property type="match status" value="1"/>
</dbReference>
<dbReference type="InterPro" id="IPR006137">
    <property type="entry name" value="NADH_UbQ_OxRdtase-like_20kDa"/>
</dbReference>
<dbReference type="InterPro" id="IPR006138">
    <property type="entry name" value="NADH_UQ_OxRdtase_20Kd_su"/>
</dbReference>
<dbReference type="NCBIfam" id="TIGR01957">
    <property type="entry name" value="nuoB_fam"/>
    <property type="match status" value="1"/>
</dbReference>
<dbReference type="NCBIfam" id="NF005012">
    <property type="entry name" value="PRK06411.1"/>
    <property type="match status" value="1"/>
</dbReference>
<dbReference type="PANTHER" id="PTHR11995">
    <property type="entry name" value="NADH DEHYDROGENASE"/>
    <property type="match status" value="1"/>
</dbReference>
<dbReference type="PANTHER" id="PTHR11995:SF14">
    <property type="entry name" value="NADH DEHYDROGENASE [UBIQUINONE] IRON-SULFUR PROTEIN 7, MITOCHONDRIAL"/>
    <property type="match status" value="1"/>
</dbReference>
<dbReference type="Pfam" id="PF01058">
    <property type="entry name" value="Oxidored_q6"/>
    <property type="match status" value="1"/>
</dbReference>
<dbReference type="SUPFAM" id="SSF56770">
    <property type="entry name" value="HydA/Nqo6-like"/>
    <property type="match status" value="1"/>
</dbReference>
<dbReference type="PROSITE" id="PS01150">
    <property type="entry name" value="COMPLEX1_20K"/>
    <property type="match status" value="1"/>
</dbReference>
<reference key="1">
    <citation type="submission" date="2007-03" db="EMBL/GenBank/DDBJ databases">
        <title>Sequencing analysis of Arabis hirsuta chloroplast DNA.</title>
        <authorList>
            <person name="Hosouchi T."/>
            <person name="Tsuruoka H."/>
            <person name="Kotani H."/>
        </authorList>
    </citation>
    <scope>NUCLEOTIDE SEQUENCE [LARGE SCALE GENOMIC DNA]</scope>
</reference>
<geneLocation type="chloroplast"/>
<accession>A4QK22</accession>
<protein>
    <recommendedName>
        <fullName evidence="1">NAD(P)H-quinone oxidoreductase subunit K, chloroplastic</fullName>
        <ecNumber evidence="1">7.1.1.-</ecNumber>
    </recommendedName>
    <alternativeName>
        <fullName evidence="1">NAD(P)H dehydrogenase subunit K</fullName>
    </alternativeName>
    <alternativeName>
        <fullName evidence="1">NADH-plastoquinone oxidoreductase subunit K</fullName>
    </alternativeName>
</protein>
<keyword id="KW-0004">4Fe-4S</keyword>
<keyword id="KW-0150">Chloroplast</keyword>
<keyword id="KW-0408">Iron</keyword>
<keyword id="KW-0411">Iron-sulfur</keyword>
<keyword id="KW-0472">Membrane</keyword>
<keyword id="KW-0479">Metal-binding</keyword>
<keyword id="KW-0520">NAD</keyword>
<keyword id="KW-0521">NADP</keyword>
<keyword id="KW-0934">Plastid</keyword>
<keyword id="KW-0618">Plastoquinone</keyword>
<keyword id="KW-0874">Quinone</keyword>
<keyword id="KW-0793">Thylakoid</keyword>
<keyword id="KW-1278">Translocase</keyword>
<keyword id="KW-0813">Transport</keyword>
<feature type="chain" id="PRO_0000358520" description="NAD(P)H-quinone oxidoreductase subunit K, chloroplastic">
    <location>
        <begin position="1"/>
        <end position="225"/>
    </location>
</feature>
<feature type="binding site" evidence="1">
    <location>
        <position position="43"/>
    </location>
    <ligand>
        <name>[4Fe-4S] cluster</name>
        <dbReference type="ChEBI" id="CHEBI:49883"/>
    </ligand>
</feature>
<feature type="binding site" evidence="1">
    <location>
        <position position="44"/>
    </location>
    <ligand>
        <name>[4Fe-4S] cluster</name>
        <dbReference type="ChEBI" id="CHEBI:49883"/>
    </ligand>
</feature>
<feature type="binding site" evidence="1">
    <location>
        <position position="108"/>
    </location>
    <ligand>
        <name>[4Fe-4S] cluster</name>
        <dbReference type="ChEBI" id="CHEBI:49883"/>
    </ligand>
</feature>
<feature type="binding site" evidence="1">
    <location>
        <position position="139"/>
    </location>
    <ligand>
        <name>[4Fe-4S] cluster</name>
        <dbReference type="ChEBI" id="CHEBI:49883"/>
    </ligand>
</feature>
<comment type="function">
    <text evidence="1">NDH shuttles electrons from NAD(P)H:plastoquinone, via FMN and iron-sulfur (Fe-S) centers, to quinones in the photosynthetic chain and possibly in a chloroplast respiratory chain. The immediate electron acceptor for the enzyme in this species is believed to be plastoquinone. Couples the redox reaction to proton translocation, and thus conserves the redox energy in a proton gradient.</text>
</comment>
<comment type="catalytic activity">
    <reaction evidence="1">
        <text>a plastoquinone + NADH + (n+1) H(+)(in) = a plastoquinol + NAD(+) + n H(+)(out)</text>
        <dbReference type="Rhea" id="RHEA:42608"/>
        <dbReference type="Rhea" id="RHEA-COMP:9561"/>
        <dbReference type="Rhea" id="RHEA-COMP:9562"/>
        <dbReference type="ChEBI" id="CHEBI:15378"/>
        <dbReference type="ChEBI" id="CHEBI:17757"/>
        <dbReference type="ChEBI" id="CHEBI:57540"/>
        <dbReference type="ChEBI" id="CHEBI:57945"/>
        <dbReference type="ChEBI" id="CHEBI:62192"/>
    </reaction>
</comment>
<comment type="catalytic activity">
    <reaction evidence="1">
        <text>a plastoquinone + NADPH + (n+1) H(+)(in) = a plastoquinol + NADP(+) + n H(+)(out)</text>
        <dbReference type="Rhea" id="RHEA:42612"/>
        <dbReference type="Rhea" id="RHEA-COMP:9561"/>
        <dbReference type="Rhea" id="RHEA-COMP:9562"/>
        <dbReference type="ChEBI" id="CHEBI:15378"/>
        <dbReference type="ChEBI" id="CHEBI:17757"/>
        <dbReference type="ChEBI" id="CHEBI:57783"/>
        <dbReference type="ChEBI" id="CHEBI:58349"/>
        <dbReference type="ChEBI" id="CHEBI:62192"/>
    </reaction>
</comment>
<comment type="cofactor">
    <cofactor evidence="1">
        <name>[4Fe-4S] cluster</name>
        <dbReference type="ChEBI" id="CHEBI:49883"/>
    </cofactor>
    <text evidence="1">Binds 1 [4Fe-4S] cluster.</text>
</comment>
<comment type="subunit">
    <text evidence="1">NDH is composed of at least 16 different subunits, 5 of which are encoded in the nucleus.</text>
</comment>
<comment type="subcellular location">
    <subcellularLocation>
        <location evidence="1">Plastid</location>
        <location evidence="1">Chloroplast thylakoid membrane</location>
        <topology evidence="1">Peripheral membrane protein</topology>
        <orientation evidence="1">Stromal side</orientation>
    </subcellularLocation>
</comment>
<comment type="similarity">
    <text evidence="1">Belongs to the complex I 20 kDa subunit family.</text>
</comment>